<sequence length="385" mass="43309">MGDGWGPMECRNRSGTPTTVPSPMHPLPELTHQWTMGMTMFMAAIILLIVMGNIMVIVAIGRNQRLQTLTNVFITSLACADLIMGLFVVPLGATLVVSGRWLYGSIFCEFWTSVDVLCVTASIETLCVISIDRYIAITSPFRYQSLLTKGRAKGIVCSVWGISALVSFLPIMMHWWRDTGDPLAMKCYEDPGCCDFVTNRAYAIASSIISFYFPLIIMIFVYIRVFKEAQKQMKKIDKCEGRFSHSHVLSHGRSSRRILSKILVAKEQKALKTLGIIMGTFTLCWLPFFLANVVNVFYRNLIPDKLFLFLNWLGYANSAFNPIIYCRSPDFRKAFKRLLCCPKKADRHLHTTGELSRYSGGFVNSLDTNALGMCSECNGVRTSLD</sequence>
<name>ADRB1_XENLA</name>
<gene>
    <name type="primary">adrb1</name>
</gene>
<keyword id="KW-1003">Cell membrane</keyword>
<keyword id="KW-1015">Disulfide bond</keyword>
<keyword id="KW-0967">Endosome</keyword>
<keyword id="KW-0297">G-protein coupled receptor</keyword>
<keyword id="KW-0325">Glycoprotein</keyword>
<keyword id="KW-0449">Lipoprotein</keyword>
<keyword id="KW-0472">Membrane</keyword>
<keyword id="KW-0564">Palmitate</keyword>
<keyword id="KW-0597">Phosphoprotein</keyword>
<keyword id="KW-0675">Receptor</keyword>
<keyword id="KW-1185">Reference proteome</keyword>
<keyword id="KW-0807">Transducer</keyword>
<keyword id="KW-0812">Transmembrane</keyword>
<keyword id="KW-1133">Transmembrane helix</keyword>
<protein>
    <recommendedName>
        <fullName>Beta-1 adrenergic receptor</fullName>
    </recommendedName>
    <alternativeName>
        <fullName>Beta-1 adrenoreceptor</fullName>
        <shortName>Beta-1 adrenoceptor</shortName>
        <shortName>x-BETA1AR</shortName>
    </alternativeName>
</protein>
<dbReference type="EMBL" id="Y09213">
    <property type="protein sequence ID" value="CAA70415.1"/>
    <property type="molecule type" value="mRNA"/>
</dbReference>
<dbReference type="RefSeq" id="NP_001084152.1">
    <property type="nucleotide sequence ID" value="NM_001090683.1"/>
</dbReference>
<dbReference type="SMR" id="O42574"/>
<dbReference type="GlyCosmos" id="O42574">
    <property type="glycosylation" value="1 site, No reported glycans"/>
</dbReference>
<dbReference type="GeneID" id="108697308"/>
<dbReference type="CTD" id="108697308"/>
<dbReference type="Proteomes" id="UP000186698">
    <property type="component" value="Unplaced"/>
</dbReference>
<dbReference type="GO" id="GO:0005769">
    <property type="term" value="C:early endosome"/>
    <property type="evidence" value="ECO:0000250"/>
    <property type="project" value="UniProtKB"/>
</dbReference>
<dbReference type="GO" id="GO:0005886">
    <property type="term" value="C:plasma membrane"/>
    <property type="evidence" value="ECO:0000250"/>
    <property type="project" value="UniProtKB"/>
</dbReference>
<dbReference type="GO" id="GO:0004940">
    <property type="term" value="F:beta1-adrenergic receptor activity"/>
    <property type="evidence" value="ECO:0000250"/>
    <property type="project" value="UniProtKB"/>
</dbReference>
<dbReference type="GO" id="GO:0071880">
    <property type="term" value="P:adenylate cyclase-activating adrenergic receptor signaling pathway"/>
    <property type="evidence" value="ECO:0000250"/>
    <property type="project" value="UniProtKB"/>
</dbReference>
<dbReference type="GO" id="GO:0002025">
    <property type="term" value="P:norepinephrine-epinephrine-mediated vasodilation involved in regulation of systemic arterial blood pressure"/>
    <property type="evidence" value="ECO:0000318"/>
    <property type="project" value="GO_Central"/>
</dbReference>
<dbReference type="GO" id="GO:0045823">
    <property type="term" value="P:positive regulation of heart contraction"/>
    <property type="evidence" value="ECO:0007669"/>
    <property type="project" value="InterPro"/>
</dbReference>
<dbReference type="GO" id="GO:0043410">
    <property type="term" value="P:positive regulation of MAPK cascade"/>
    <property type="evidence" value="ECO:0000318"/>
    <property type="project" value="GO_Central"/>
</dbReference>
<dbReference type="CDD" id="cd15958">
    <property type="entry name" value="7tmA_Beta1_AR"/>
    <property type="match status" value="1"/>
</dbReference>
<dbReference type="FunFam" id="1.20.1070.10:FF:000057">
    <property type="entry name" value="Beta-1 adrenergic receptor"/>
    <property type="match status" value="1"/>
</dbReference>
<dbReference type="Gene3D" id="1.20.1070.10">
    <property type="entry name" value="Rhodopsin 7-helix transmembrane proteins"/>
    <property type="match status" value="1"/>
</dbReference>
<dbReference type="InterPro" id="IPR002233">
    <property type="entry name" value="ADR_fam"/>
</dbReference>
<dbReference type="InterPro" id="IPR000507">
    <property type="entry name" value="ADRB1_rcpt"/>
</dbReference>
<dbReference type="InterPro" id="IPR000276">
    <property type="entry name" value="GPCR_Rhodpsn"/>
</dbReference>
<dbReference type="InterPro" id="IPR017452">
    <property type="entry name" value="GPCR_Rhodpsn_7TM"/>
</dbReference>
<dbReference type="PANTHER" id="PTHR24248">
    <property type="entry name" value="ADRENERGIC RECEPTOR-RELATED G-PROTEIN COUPLED RECEPTOR"/>
    <property type="match status" value="1"/>
</dbReference>
<dbReference type="PANTHER" id="PTHR24248:SF54">
    <property type="entry name" value="BETA-1 ADRENERGIC RECEPTOR"/>
    <property type="match status" value="1"/>
</dbReference>
<dbReference type="Pfam" id="PF00001">
    <property type="entry name" value="7tm_1"/>
    <property type="match status" value="1"/>
</dbReference>
<dbReference type="PRINTS" id="PR01103">
    <property type="entry name" value="ADRENERGICR"/>
</dbReference>
<dbReference type="PRINTS" id="PR00561">
    <property type="entry name" value="ADRENRGCB1AR"/>
</dbReference>
<dbReference type="PRINTS" id="PR00237">
    <property type="entry name" value="GPCRRHODOPSN"/>
</dbReference>
<dbReference type="SMART" id="SM01381">
    <property type="entry name" value="7TM_GPCR_Srsx"/>
    <property type="match status" value="1"/>
</dbReference>
<dbReference type="SUPFAM" id="SSF81321">
    <property type="entry name" value="Family A G protein-coupled receptor-like"/>
    <property type="match status" value="1"/>
</dbReference>
<dbReference type="PROSITE" id="PS00237">
    <property type="entry name" value="G_PROTEIN_RECEP_F1_1"/>
    <property type="match status" value="1"/>
</dbReference>
<dbReference type="PROSITE" id="PS50262">
    <property type="entry name" value="G_PROTEIN_RECEP_F1_2"/>
    <property type="match status" value="1"/>
</dbReference>
<feature type="chain" id="PRO_0000069126" description="Beta-1 adrenergic receptor">
    <location>
        <begin position="1"/>
        <end position="385"/>
    </location>
</feature>
<feature type="topological domain" description="Extracellular" evidence="1">
    <location>
        <begin position="1"/>
        <end position="32"/>
    </location>
</feature>
<feature type="transmembrane region" description="Helical; Name=1" evidence="1">
    <location>
        <begin position="33"/>
        <end position="61"/>
    </location>
</feature>
<feature type="topological domain" description="Cytoplasmic" evidence="1">
    <location>
        <begin position="62"/>
        <end position="70"/>
    </location>
</feature>
<feature type="transmembrane region" description="Helical; Name=2" evidence="1">
    <location>
        <begin position="71"/>
        <end position="97"/>
    </location>
</feature>
<feature type="topological domain" description="Extracellular" evidence="1">
    <location>
        <begin position="98"/>
        <end position="109"/>
    </location>
</feature>
<feature type="topological domain" description="Cytoplasmic" evidence="1">
    <location>
        <begin position="132"/>
        <end position="149"/>
    </location>
</feature>
<feature type="transmembrane region" description="Helical; Name=4" evidence="1">
    <location>
        <begin position="150"/>
        <end position="173"/>
    </location>
</feature>
<feature type="topological domain" description="Extracellular" evidence="1">
    <location>
        <begin position="174"/>
        <end position="200"/>
    </location>
</feature>
<feature type="transmembrane region" description="Helical; Name=5" evidence="1">
    <location>
        <begin position="201"/>
        <end position="226"/>
    </location>
</feature>
<feature type="topological domain" description="Cytoplasmic" evidence="1">
    <location>
        <begin position="227"/>
        <end position="267"/>
    </location>
</feature>
<feature type="transmembrane region" description="Helical; Name=6" evidence="1">
    <location>
        <begin position="268"/>
        <end position="297"/>
    </location>
</feature>
<feature type="topological domain" description="Extracellular" evidence="1">
    <location>
        <begin position="298"/>
        <end position="302"/>
    </location>
</feature>
<feature type="transmembrane region" description="Helical; Name=7" evidence="1">
    <location>
        <begin position="303"/>
        <end position="325"/>
    </location>
</feature>
<feature type="topological domain" description="Cytoplasmic" evidence="1">
    <location>
        <begin position="326"/>
        <end position="385"/>
    </location>
</feature>
<feature type="region of interest" description="Disordered" evidence="4">
    <location>
        <begin position="1"/>
        <end position="24"/>
    </location>
</feature>
<feature type="lipid moiety-binding region" description="S-palmitoyl cysteine" evidence="1">
    <location>
        <position position="340"/>
    </location>
</feature>
<feature type="glycosylation site" description="N-linked (GlcNAc...) asparagine" evidence="2">
    <location>
        <position position="12"/>
    </location>
</feature>
<feature type="disulfide bond" evidence="3">
    <location>
        <begin position="108"/>
        <end position="194"/>
    </location>
</feature>
<feature type="disulfide bond" evidence="3">
    <location>
        <begin position="187"/>
        <end position="193"/>
    </location>
</feature>
<evidence type="ECO:0000250" key="1"/>
<evidence type="ECO:0000255" key="2"/>
<evidence type="ECO:0000255" key="3">
    <source>
        <dbReference type="PROSITE-ProRule" id="PRU00521"/>
    </source>
</evidence>
<evidence type="ECO:0000256" key="4">
    <source>
        <dbReference type="SAM" id="MobiDB-lite"/>
    </source>
</evidence>
<organism>
    <name type="scientific">Xenopus laevis</name>
    <name type="common">African clawed frog</name>
    <dbReference type="NCBI Taxonomy" id="8355"/>
    <lineage>
        <taxon>Eukaryota</taxon>
        <taxon>Metazoa</taxon>
        <taxon>Chordata</taxon>
        <taxon>Craniata</taxon>
        <taxon>Vertebrata</taxon>
        <taxon>Euteleostomi</taxon>
        <taxon>Amphibia</taxon>
        <taxon>Batrachia</taxon>
        <taxon>Anura</taxon>
        <taxon>Pipoidea</taxon>
        <taxon>Pipidae</taxon>
        <taxon>Xenopodinae</taxon>
        <taxon>Xenopus</taxon>
        <taxon>Xenopus</taxon>
    </lineage>
</organism>
<comment type="function">
    <text evidence="1">Beta-adrenergic receptors mediate the catecholamine-induced activation of adenylate cyclase through the action of G proteins.</text>
</comment>
<comment type="subcellular location">
    <subcellularLocation>
        <location>Cell membrane</location>
        <topology>Multi-pass membrane protein</topology>
    </subcellularLocation>
    <subcellularLocation>
        <location evidence="1">Early endosome</location>
    </subcellularLocation>
</comment>
<comment type="PTM">
    <text evidence="1">Homologous desensitization of the receptor is mediated by its phosphorylation by beta-adrenergic receptor kinase.</text>
</comment>
<comment type="similarity">
    <text evidence="3">Belongs to the G-protein coupled receptor 1 family. Adrenergic receptor subfamily. ADRB1 sub-subfamily.</text>
</comment>
<proteinExistence type="evidence at transcript level"/>
<accession>O42574</accession>
<reference key="1">
    <citation type="journal article" date="1997" name="FEBS Lett.">
        <title>Early expression of a beta1-adrenergic receptor and catecholamines in Xenopus oocytes and embryos.</title>
        <authorList>
            <person name="Devic E."/>
            <person name="Paquereau L."/>
            <person name="Kaghad M."/>
            <person name="Steinberg R."/>
            <person name="Caput D."/>
            <person name="Audigier Y."/>
        </authorList>
    </citation>
    <scope>NUCLEOTIDE SEQUENCE [MRNA]</scope>
</reference>